<reference key="1">
    <citation type="journal article" date="2001" name="Proc. Natl. Acad. Sci. U.S.A.">
        <title>Complete genomic sequence of Pasteurella multocida Pm70.</title>
        <authorList>
            <person name="May B.J."/>
            <person name="Zhang Q."/>
            <person name="Li L.L."/>
            <person name="Paustian M.L."/>
            <person name="Whittam T.S."/>
            <person name="Kapur V."/>
        </authorList>
    </citation>
    <scope>NUCLEOTIDE SEQUENCE [LARGE SCALE GENOMIC DNA]</scope>
    <source>
        <strain>Pm70</strain>
    </source>
</reference>
<protein>
    <recommendedName>
        <fullName evidence="1">Thiol peroxidase</fullName>
        <shortName evidence="1">Tpx</shortName>
        <ecNumber evidence="1">1.11.1.24</ecNumber>
    </recommendedName>
    <alternativeName>
        <fullName evidence="1">Peroxiredoxin tpx</fullName>
        <shortName evidence="1">Prx</shortName>
    </alternativeName>
    <alternativeName>
        <fullName evidence="1">Thioredoxin peroxidase</fullName>
    </alternativeName>
    <alternativeName>
        <fullName evidence="1">Thioredoxin-dependent peroxiredoxin</fullName>
    </alternativeName>
</protein>
<gene>
    <name evidence="1" type="primary">tpx</name>
    <name type="ordered locus">PM0820</name>
</gene>
<comment type="function">
    <text evidence="1">Thiol-specific peroxidase that catalyzes the reduction of hydrogen peroxide and organic hydroperoxides to water and alcohols, respectively. Plays a role in cell protection against oxidative stress by detoxifying peroxides.</text>
</comment>
<comment type="catalytic activity">
    <reaction evidence="1">
        <text>a hydroperoxide + [thioredoxin]-dithiol = an alcohol + [thioredoxin]-disulfide + H2O</text>
        <dbReference type="Rhea" id="RHEA:62620"/>
        <dbReference type="Rhea" id="RHEA-COMP:10698"/>
        <dbReference type="Rhea" id="RHEA-COMP:10700"/>
        <dbReference type="ChEBI" id="CHEBI:15377"/>
        <dbReference type="ChEBI" id="CHEBI:29950"/>
        <dbReference type="ChEBI" id="CHEBI:30879"/>
        <dbReference type="ChEBI" id="CHEBI:35924"/>
        <dbReference type="ChEBI" id="CHEBI:50058"/>
        <dbReference type="EC" id="1.11.1.24"/>
    </reaction>
</comment>
<comment type="subunit">
    <text evidence="1">Homodimer.</text>
</comment>
<comment type="miscellaneous">
    <text evidence="1">The active site is a conserved redox-active cysteine residue, the peroxidatic cysteine (C(P)), which makes the nucleophilic attack on the peroxide substrate. The peroxide oxidizes the C(P)-SH to cysteine sulfenic acid (C(P)-SOH), which then reacts with another cysteine residue, the resolving cysteine (C(R)), to form a disulfide bridge. The disulfide is subsequently reduced by an appropriate electron donor to complete the catalytic cycle. In this atypical 2-Cys peroxiredoxin, C(R) is present in the same subunit to form an intramolecular disulfide. The disulfide is subsequently reduced by thioredoxin.</text>
</comment>
<comment type="similarity">
    <text evidence="1">Belongs to the peroxiredoxin family. Tpx subfamily.</text>
</comment>
<evidence type="ECO:0000255" key="1">
    <source>
        <dbReference type="HAMAP-Rule" id="MF_00269"/>
    </source>
</evidence>
<sequence length="165" mass="17706">MSKITLAGTEIEVSGVFPQVGDVVTDFTTVSAKLEDTTLANFAGKRKILNIFPSIDTGICATSVRKFNEQAAKLANTAVLCLSTDLPFAQARFCGAEGLENVFTVSTFRNKDVHKQLGVDIVEGPLAGLTARAVIVLDENNRVLHSELVPEIKQEPNYDAALAVL</sequence>
<keyword id="KW-0049">Antioxidant</keyword>
<keyword id="KW-1015">Disulfide bond</keyword>
<keyword id="KW-0560">Oxidoreductase</keyword>
<keyword id="KW-0575">Peroxidase</keyword>
<keyword id="KW-0676">Redox-active center</keyword>
<keyword id="KW-1185">Reference proteome</keyword>
<dbReference type="EC" id="1.11.1.24" evidence="1"/>
<dbReference type="EMBL" id="AE004439">
    <property type="protein sequence ID" value="AAK02904.1"/>
    <property type="molecule type" value="Genomic_DNA"/>
</dbReference>
<dbReference type="RefSeq" id="WP_010906866.1">
    <property type="nucleotide sequence ID" value="NC_002663.1"/>
</dbReference>
<dbReference type="SMR" id="P57880"/>
<dbReference type="STRING" id="272843.PM0820"/>
<dbReference type="EnsemblBacteria" id="AAK02904">
    <property type="protein sequence ID" value="AAK02904"/>
    <property type="gene ID" value="PM0820"/>
</dbReference>
<dbReference type="KEGG" id="pmu:PM0820"/>
<dbReference type="PATRIC" id="fig|272843.6.peg.829"/>
<dbReference type="HOGENOM" id="CLU_042529_12_2_6"/>
<dbReference type="OrthoDB" id="9781543at2"/>
<dbReference type="Proteomes" id="UP000000809">
    <property type="component" value="Chromosome"/>
</dbReference>
<dbReference type="GO" id="GO:0008379">
    <property type="term" value="F:thioredoxin peroxidase activity"/>
    <property type="evidence" value="ECO:0007669"/>
    <property type="project" value="UniProtKB-UniRule"/>
</dbReference>
<dbReference type="CDD" id="cd03014">
    <property type="entry name" value="PRX_Atyp2cys"/>
    <property type="match status" value="1"/>
</dbReference>
<dbReference type="Gene3D" id="3.40.30.10">
    <property type="entry name" value="Glutaredoxin"/>
    <property type="match status" value="1"/>
</dbReference>
<dbReference type="HAMAP" id="MF_00269">
    <property type="entry name" value="Tpx"/>
    <property type="match status" value="1"/>
</dbReference>
<dbReference type="InterPro" id="IPR013740">
    <property type="entry name" value="Redoxin"/>
</dbReference>
<dbReference type="InterPro" id="IPR036249">
    <property type="entry name" value="Thioredoxin-like_sf"/>
</dbReference>
<dbReference type="InterPro" id="IPR013766">
    <property type="entry name" value="Thioredoxin_domain"/>
</dbReference>
<dbReference type="InterPro" id="IPR002065">
    <property type="entry name" value="TPX"/>
</dbReference>
<dbReference type="InterPro" id="IPR018219">
    <property type="entry name" value="Tpx_CS"/>
</dbReference>
<dbReference type="InterPro" id="IPR050455">
    <property type="entry name" value="Tpx_Peroxidase_subfamily"/>
</dbReference>
<dbReference type="NCBIfam" id="NF001808">
    <property type="entry name" value="PRK00522.1"/>
    <property type="match status" value="1"/>
</dbReference>
<dbReference type="PANTHER" id="PTHR43110">
    <property type="entry name" value="THIOL PEROXIDASE"/>
    <property type="match status" value="1"/>
</dbReference>
<dbReference type="PANTHER" id="PTHR43110:SF1">
    <property type="entry name" value="THIOL PEROXIDASE"/>
    <property type="match status" value="1"/>
</dbReference>
<dbReference type="Pfam" id="PF08534">
    <property type="entry name" value="Redoxin"/>
    <property type="match status" value="1"/>
</dbReference>
<dbReference type="SUPFAM" id="SSF52833">
    <property type="entry name" value="Thioredoxin-like"/>
    <property type="match status" value="1"/>
</dbReference>
<dbReference type="PROSITE" id="PS51352">
    <property type="entry name" value="THIOREDOXIN_2"/>
    <property type="match status" value="1"/>
</dbReference>
<dbReference type="PROSITE" id="PS01265">
    <property type="entry name" value="TPX"/>
    <property type="match status" value="1"/>
</dbReference>
<feature type="chain" id="PRO_0000187891" description="Thiol peroxidase">
    <location>
        <begin position="1"/>
        <end position="165"/>
    </location>
</feature>
<feature type="domain" description="Thioredoxin" evidence="1">
    <location>
        <begin position="18"/>
        <end position="165"/>
    </location>
</feature>
<feature type="active site" description="Cysteine sulfenic acid (-SOH) intermediate" evidence="1">
    <location>
        <position position="60"/>
    </location>
</feature>
<feature type="disulfide bond" description="Redox-active" evidence="1">
    <location>
        <begin position="60"/>
        <end position="94"/>
    </location>
</feature>
<proteinExistence type="inferred from homology"/>
<organism>
    <name type="scientific">Pasteurella multocida (strain Pm70)</name>
    <dbReference type="NCBI Taxonomy" id="272843"/>
    <lineage>
        <taxon>Bacteria</taxon>
        <taxon>Pseudomonadati</taxon>
        <taxon>Pseudomonadota</taxon>
        <taxon>Gammaproteobacteria</taxon>
        <taxon>Pasteurellales</taxon>
        <taxon>Pasteurellaceae</taxon>
        <taxon>Pasteurella</taxon>
    </lineage>
</organism>
<name>TPX_PASMU</name>
<accession>P57880</accession>